<evidence type="ECO:0000255" key="1"/>
<evidence type="ECO:0000269" key="2">
    <source>
    </source>
</evidence>
<evidence type="ECO:0000269" key="3">
    <source>
    </source>
</evidence>
<evidence type="ECO:0000305" key="4"/>
<sequence>MLELLFVIGFFVMLMVTGVSLLGIIAALVVATAIMFLGGMLALMIKLLPWLLLAIAVVWVIKAIKAPKVPKYQRYDRWRY</sequence>
<name>PSPG_ECOLI</name>
<accession>P32696</accession>
<accession>Q2M6Q4</accession>
<dbReference type="EMBL" id="U00006">
    <property type="protein sequence ID" value="AAC43144.1"/>
    <property type="status" value="ALT_INIT"/>
    <property type="molecule type" value="Genomic_DNA"/>
</dbReference>
<dbReference type="EMBL" id="U00096">
    <property type="protein sequence ID" value="AAC77020.2"/>
    <property type="molecule type" value="Genomic_DNA"/>
</dbReference>
<dbReference type="EMBL" id="AP009048">
    <property type="protein sequence ID" value="BAE78052.1"/>
    <property type="molecule type" value="Genomic_DNA"/>
</dbReference>
<dbReference type="PIR" id="A65213">
    <property type="entry name" value="A65213"/>
</dbReference>
<dbReference type="RefSeq" id="NP_418474.4">
    <property type="nucleotide sequence ID" value="NC_000913.3"/>
</dbReference>
<dbReference type="RefSeq" id="WP_000891404.1">
    <property type="nucleotide sequence ID" value="NZ_SSZK01000016.1"/>
</dbReference>
<dbReference type="SMR" id="P32696"/>
<dbReference type="BioGRID" id="4263114">
    <property type="interactions" value="7"/>
</dbReference>
<dbReference type="FunCoup" id="P32696">
    <property type="interactions" value="89"/>
</dbReference>
<dbReference type="IntAct" id="P32696">
    <property type="interactions" value="1"/>
</dbReference>
<dbReference type="STRING" id="511145.b4050"/>
<dbReference type="PaxDb" id="511145-b4050"/>
<dbReference type="EnsemblBacteria" id="AAC77020">
    <property type="protein sequence ID" value="AAC77020"/>
    <property type="gene ID" value="b4050"/>
</dbReference>
<dbReference type="GeneID" id="93777782"/>
<dbReference type="GeneID" id="948557"/>
<dbReference type="KEGG" id="ecj:JW5716"/>
<dbReference type="KEGG" id="eco:b4050"/>
<dbReference type="KEGG" id="ecoc:C3026_21885"/>
<dbReference type="PATRIC" id="fig|511145.12.peg.4168"/>
<dbReference type="EchoBASE" id="EB1877"/>
<dbReference type="eggNOG" id="ENOG50332RI">
    <property type="taxonomic scope" value="Bacteria"/>
</dbReference>
<dbReference type="HOGENOM" id="CLU_165376_0_0_6"/>
<dbReference type="InParanoid" id="P32696"/>
<dbReference type="OMA" id="MFEILFV"/>
<dbReference type="OrthoDB" id="6566611at2"/>
<dbReference type="PhylomeDB" id="P32696"/>
<dbReference type="BioCyc" id="EcoCyc:EG11933-MONOMER"/>
<dbReference type="PRO" id="PR:P32696"/>
<dbReference type="Proteomes" id="UP000000625">
    <property type="component" value="Chromosome"/>
</dbReference>
<dbReference type="GO" id="GO:0005886">
    <property type="term" value="C:plasma membrane"/>
    <property type="evidence" value="ECO:0007669"/>
    <property type="project" value="UniProtKB-SubCell"/>
</dbReference>
<dbReference type="GO" id="GO:0009271">
    <property type="term" value="P:phage shock"/>
    <property type="evidence" value="ECO:0000270"/>
    <property type="project" value="EcoCyc"/>
</dbReference>
<dbReference type="InterPro" id="IPR014318">
    <property type="entry name" value="Phageshock_PspG"/>
</dbReference>
<dbReference type="NCBIfam" id="TIGR02975">
    <property type="entry name" value="phageshock_pspG"/>
    <property type="match status" value="1"/>
</dbReference>
<dbReference type="Pfam" id="PF09583">
    <property type="entry name" value="Phageshock_PspG"/>
    <property type="match status" value="1"/>
</dbReference>
<comment type="function">
    <text evidence="2">Effector of the phage shock response.</text>
</comment>
<comment type="interaction">
    <interactant intactId="EBI-25641301">
        <id>P32696</id>
    </interactant>
    <interactant intactId="EBI-1134561">
        <id>P0AFN2</id>
        <label>pspC</label>
    </interactant>
    <organismsDiffer>false</organismsDiffer>
    <experiments>3</experiments>
</comment>
<comment type="subcellular location">
    <subcellularLocation>
        <location evidence="3">Cell inner membrane</location>
        <topology evidence="3">Multi-pass membrane protein</topology>
    </subcellularLocation>
    <text>Localizes at both cell poles and along the length of the cell.</text>
</comment>
<comment type="induction">
    <text evidence="2">Up-regulated in response to filamentous phage secretin protein IV. Induced by PspF and negatively regulated by PspA.</text>
</comment>
<comment type="sequence caution" evidence="4">
    <conflict type="erroneous initiation">
        <sequence resource="EMBL-CDS" id="AAC43144"/>
    </conflict>
    <text>Extended N-terminus.</text>
</comment>
<gene>
    <name type="primary">pspG</name>
    <name type="synonym">yjbO</name>
    <name type="ordered locus">b4050</name>
    <name type="ordered locus">JW5716</name>
</gene>
<protein>
    <recommendedName>
        <fullName>Phage shock protein G</fullName>
    </recommendedName>
</protein>
<keyword id="KW-0997">Cell inner membrane</keyword>
<keyword id="KW-1003">Cell membrane</keyword>
<keyword id="KW-0472">Membrane</keyword>
<keyword id="KW-1185">Reference proteome</keyword>
<keyword id="KW-0346">Stress response</keyword>
<keyword id="KW-0812">Transmembrane</keyword>
<keyword id="KW-1133">Transmembrane helix</keyword>
<proteinExistence type="evidence at protein level"/>
<reference key="1">
    <citation type="journal article" date="1993" name="Nucleic Acids Res.">
        <title>Analysis of the Escherichia coli genome. IV. DNA sequence of the region from 89.2 to 92.8 minutes.</title>
        <authorList>
            <person name="Blattner F.R."/>
            <person name="Burland V.D."/>
            <person name="Plunkett G. III"/>
            <person name="Sofia H.J."/>
            <person name="Daniels D.L."/>
        </authorList>
    </citation>
    <scope>NUCLEOTIDE SEQUENCE [LARGE SCALE GENOMIC DNA]</scope>
    <source>
        <strain>K12 / MG1655 / ATCC 47076</strain>
    </source>
</reference>
<reference key="2">
    <citation type="journal article" date="1997" name="Science">
        <title>The complete genome sequence of Escherichia coli K-12.</title>
        <authorList>
            <person name="Blattner F.R."/>
            <person name="Plunkett G. III"/>
            <person name="Bloch C.A."/>
            <person name="Perna N.T."/>
            <person name="Burland V."/>
            <person name="Riley M."/>
            <person name="Collado-Vides J."/>
            <person name="Glasner J.D."/>
            <person name="Rode C.K."/>
            <person name="Mayhew G.F."/>
            <person name="Gregor J."/>
            <person name="Davis N.W."/>
            <person name="Kirkpatrick H.A."/>
            <person name="Goeden M.A."/>
            <person name="Rose D.J."/>
            <person name="Mau B."/>
            <person name="Shao Y."/>
        </authorList>
    </citation>
    <scope>NUCLEOTIDE SEQUENCE [LARGE SCALE GENOMIC DNA]</scope>
    <source>
        <strain>K12 / MG1655 / ATCC 47076</strain>
    </source>
</reference>
<reference key="3">
    <citation type="journal article" date="2006" name="Mol. Syst. Biol.">
        <title>Highly accurate genome sequences of Escherichia coli K-12 strains MG1655 and W3110.</title>
        <authorList>
            <person name="Hayashi K."/>
            <person name="Morooka N."/>
            <person name="Yamamoto Y."/>
            <person name="Fujita K."/>
            <person name="Isono K."/>
            <person name="Choi S."/>
            <person name="Ohtsubo E."/>
            <person name="Baba T."/>
            <person name="Wanner B.L."/>
            <person name="Mori H."/>
            <person name="Horiuchi T."/>
        </authorList>
    </citation>
    <scope>NUCLEOTIDE SEQUENCE [LARGE SCALE GENOMIC DNA]</scope>
    <source>
        <strain>K12 / W3110 / ATCC 27325 / DSM 5911</strain>
    </source>
</reference>
<reference key="4">
    <citation type="journal article" date="2004" name="J. Biol. Chem.">
        <title>Identification of a new member of the phage shock protein response in Escherichia coli, the phage shock protein G (PspG).</title>
        <authorList>
            <person name="Lloyd L.J."/>
            <person name="Jones S.E."/>
            <person name="Jovanovic G."/>
            <person name="Gyaneshwar P."/>
            <person name="Rolfe M.D."/>
            <person name="Thompson A."/>
            <person name="Hinton J.C."/>
            <person name="Buck M."/>
        </authorList>
    </citation>
    <scope>FUNCTION IN PHAGE SHOCK RESPONSE</scope>
    <scope>INDUCTION</scope>
    <source>
        <strain>K12 / MG1655 / ATCC 47076</strain>
    </source>
</reference>
<reference key="5">
    <citation type="journal article" date="2009" name="Mol. Microbiol.">
        <title>In vivo localizations of membrane stress controllers PspA and PspG in Escherichia coli.</title>
        <authorList>
            <person name="Engl C."/>
            <person name="Jovanovic G."/>
            <person name="Lloyd L.J."/>
            <person name="Murray H."/>
            <person name="Spitaler M."/>
            <person name="Ying L."/>
            <person name="Errington J."/>
            <person name="Buck M."/>
        </authorList>
    </citation>
    <scope>SUBCELLULAR LOCATION</scope>
    <source>
        <strain>K12 / MG1655 / ATCC 47076</strain>
    </source>
</reference>
<organism>
    <name type="scientific">Escherichia coli (strain K12)</name>
    <dbReference type="NCBI Taxonomy" id="83333"/>
    <lineage>
        <taxon>Bacteria</taxon>
        <taxon>Pseudomonadati</taxon>
        <taxon>Pseudomonadota</taxon>
        <taxon>Gammaproteobacteria</taxon>
        <taxon>Enterobacterales</taxon>
        <taxon>Enterobacteriaceae</taxon>
        <taxon>Escherichia</taxon>
    </lineage>
</organism>
<feature type="chain" id="PRO_0000169714" description="Phage shock protein G">
    <location>
        <begin position="1"/>
        <end position="80"/>
    </location>
</feature>
<feature type="transmembrane region" description="Helical" evidence="1">
    <location>
        <begin position="5"/>
        <end position="25"/>
    </location>
</feature>
<feature type="transmembrane region" description="Helical" evidence="1">
    <location>
        <begin position="41"/>
        <end position="61"/>
    </location>
</feature>